<evidence type="ECO:0000250" key="1"/>
<evidence type="ECO:0000250" key="2">
    <source>
        <dbReference type="UniProtKB" id="Q96JA3"/>
    </source>
</evidence>
<evidence type="ECO:0000255" key="3">
    <source>
        <dbReference type="PROSITE-ProRule" id="PRU00145"/>
    </source>
</evidence>
<evidence type="ECO:0000256" key="4">
    <source>
        <dbReference type="SAM" id="MobiDB-lite"/>
    </source>
</evidence>
<evidence type="ECO:0007744" key="5">
    <source>
    </source>
</evidence>
<proteinExistence type="evidence at protein level"/>
<comment type="function">
    <text evidence="1">Cargo transport protein that is required for apical transport from the trans-Golgi network (TGN). Transports AQP2 from the trans-Golgi network (TGN) to sites of AQP2 phosphorylation. Mediates the non-vesicular transport of glucosylceramide (GlcCer) from the trans-Golgi network (TGN) to the plasma membrane and plays a pivotal role in the synthesis of complex glycosphingolipids. Binding of both phosphatidylinositol 4-phosphate (PIP) and ARF1 are essential for the GlcCer transfer ability. Also required for primary cilium formation, possibly by being involved in the transport of raft lipids to the apical membrane, and for membrane tubulation (By similarity).</text>
</comment>
<comment type="subunit">
    <text evidence="1">Homodimer. Interacts with ARF1; the interaction together with phosphatidylinositol 4-phosphate binding is required for FAPP2 GlcCer transfer ability.</text>
</comment>
<comment type="subcellular location">
    <subcellularLocation>
        <location evidence="2">Golgi apparatus</location>
        <location evidence="2">trans-Golgi network membrane</location>
    </subcellularLocation>
    <subcellularLocation>
        <location evidence="2">Membrane</location>
        <topology evidence="2">Peripheral membrane protein</topology>
    </subcellularLocation>
    <text evidence="2">Binds through its PH domain to PtdIns(4)P and ARF1, and subsequently localizes to TGN exit sites.</text>
</comment>
<comment type="domain">
    <text evidence="1">The PH domain of FAPPS binds the small GTPase ARF1 and phosphatidylinositol-4-phosphate (PtdIns4P) with high selectivity, and is required for recruitment of FAPPs to the trans-Golgi network (TGN).</text>
</comment>
<protein>
    <recommendedName>
        <fullName>Pleckstrin homology domain-containing family A member 8</fullName>
        <shortName>PH domain-containing family A member 8</shortName>
    </recommendedName>
    <alternativeName>
        <fullName>Phosphatidylinositol-four-phosphate adapter protein 2</fullName>
        <shortName>FAPP-2</shortName>
        <shortName>Phosphoinositol 4-phosphate adapter protein 2</shortName>
    </alternativeName>
</protein>
<gene>
    <name type="primary">Plekha8</name>
    <name type="synonym">Fapp2</name>
</gene>
<organism>
    <name type="scientific">Rattus norvegicus</name>
    <name type="common">Rat</name>
    <dbReference type="NCBI Taxonomy" id="10116"/>
    <lineage>
        <taxon>Eukaryota</taxon>
        <taxon>Metazoa</taxon>
        <taxon>Chordata</taxon>
        <taxon>Craniata</taxon>
        <taxon>Vertebrata</taxon>
        <taxon>Euteleostomi</taxon>
        <taxon>Mammalia</taxon>
        <taxon>Eutheria</taxon>
        <taxon>Euarchontoglires</taxon>
        <taxon>Glires</taxon>
        <taxon>Rodentia</taxon>
        <taxon>Myomorpha</taxon>
        <taxon>Muroidea</taxon>
        <taxon>Muridae</taxon>
        <taxon>Murinae</taxon>
        <taxon>Rattus</taxon>
    </lineage>
</organism>
<keyword id="KW-0333">Golgi apparatus</keyword>
<keyword id="KW-0445">Lipid transport</keyword>
<keyword id="KW-0446">Lipid-binding</keyword>
<keyword id="KW-0472">Membrane</keyword>
<keyword id="KW-0597">Phosphoprotein</keyword>
<keyword id="KW-0653">Protein transport</keyword>
<keyword id="KW-1185">Reference proteome</keyword>
<keyword id="KW-0813">Transport</keyword>
<name>PKHA8_RAT</name>
<accession>D3ZY60</accession>
<reference key="1">
    <citation type="journal article" date="2004" name="Nature">
        <title>Genome sequence of the Brown Norway rat yields insights into mammalian evolution.</title>
        <authorList>
            <person name="Gibbs R.A."/>
            <person name="Weinstock G.M."/>
            <person name="Metzker M.L."/>
            <person name="Muzny D.M."/>
            <person name="Sodergren E.J."/>
            <person name="Scherer S."/>
            <person name="Scott G."/>
            <person name="Steffen D."/>
            <person name="Worley K.C."/>
            <person name="Burch P.E."/>
            <person name="Okwuonu G."/>
            <person name="Hines S."/>
            <person name="Lewis L."/>
            <person name="Deramo C."/>
            <person name="Delgado O."/>
            <person name="Dugan-Rocha S."/>
            <person name="Miner G."/>
            <person name="Morgan M."/>
            <person name="Hawes A."/>
            <person name="Gill R."/>
            <person name="Holt R.A."/>
            <person name="Adams M.D."/>
            <person name="Amanatides P.G."/>
            <person name="Baden-Tillson H."/>
            <person name="Barnstead M."/>
            <person name="Chin S."/>
            <person name="Evans C.A."/>
            <person name="Ferriera S."/>
            <person name="Fosler C."/>
            <person name="Glodek A."/>
            <person name="Gu Z."/>
            <person name="Jennings D."/>
            <person name="Kraft C.L."/>
            <person name="Nguyen T."/>
            <person name="Pfannkoch C.M."/>
            <person name="Sitter C."/>
            <person name="Sutton G.G."/>
            <person name="Venter J.C."/>
            <person name="Woodage T."/>
            <person name="Smith D."/>
            <person name="Lee H.-M."/>
            <person name="Gustafson E."/>
            <person name="Cahill P."/>
            <person name="Kana A."/>
            <person name="Doucette-Stamm L."/>
            <person name="Weinstock K."/>
            <person name="Fechtel K."/>
            <person name="Weiss R.B."/>
            <person name="Dunn D.M."/>
            <person name="Green E.D."/>
            <person name="Blakesley R.W."/>
            <person name="Bouffard G.G."/>
            <person name="De Jong P.J."/>
            <person name="Osoegawa K."/>
            <person name="Zhu B."/>
            <person name="Marra M."/>
            <person name="Schein J."/>
            <person name="Bosdet I."/>
            <person name="Fjell C."/>
            <person name="Jones S."/>
            <person name="Krzywinski M."/>
            <person name="Mathewson C."/>
            <person name="Siddiqui A."/>
            <person name="Wye N."/>
            <person name="McPherson J."/>
            <person name="Zhao S."/>
            <person name="Fraser C.M."/>
            <person name="Shetty J."/>
            <person name="Shatsman S."/>
            <person name="Geer K."/>
            <person name="Chen Y."/>
            <person name="Abramzon S."/>
            <person name="Nierman W.C."/>
            <person name="Havlak P.H."/>
            <person name="Chen R."/>
            <person name="Durbin K.J."/>
            <person name="Egan A."/>
            <person name="Ren Y."/>
            <person name="Song X.-Z."/>
            <person name="Li B."/>
            <person name="Liu Y."/>
            <person name="Qin X."/>
            <person name="Cawley S."/>
            <person name="Cooney A.J."/>
            <person name="D'Souza L.M."/>
            <person name="Martin K."/>
            <person name="Wu J.Q."/>
            <person name="Gonzalez-Garay M.L."/>
            <person name="Jackson A.R."/>
            <person name="Kalafus K.J."/>
            <person name="McLeod M.P."/>
            <person name="Milosavljevic A."/>
            <person name="Virk D."/>
            <person name="Volkov A."/>
            <person name="Wheeler D.A."/>
            <person name="Zhang Z."/>
            <person name="Bailey J.A."/>
            <person name="Eichler E.E."/>
            <person name="Tuzun E."/>
            <person name="Birney E."/>
            <person name="Mongin E."/>
            <person name="Ureta-Vidal A."/>
            <person name="Woodwark C."/>
            <person name="Zdobnov E."/>
            <person name="Bork P."/>
            <person name="Suyama M."/>
            <person name="Torrents D."/>
            <person name="Alexandersson M."/>
            <person name="Trask B.J."/>
            <person name="Young J.M."/>
            <person name="Huang H."/>
            <person name="Wang H."/>
            <person name="Xing H."/>
            <person name="Daniels S."/>
            <person name="Gietzen D."/>
            <person name="Schmidt J."/>
            <person name="Stevens K."/>
            <person name="Vitt U."/>
            <person name="Wingrove J."/>
            <person name="Camara F."/>
            <person name="Mar Alba M."/>
            <person name="Abril J.F."/>
            <person name="Guigo R."/>
            <person name="Smit A."/>
            <person name="Dubchak I."/>
            <person name="Rubin E.M."/>
            <person name="Couronne O."/>
            <person name="Poliakov A."/>
            <person name="Huebner N."/>
            <person name="Ganten D."/>
            <person name="Goesele C."/>
            <person name="Hummel O."/>
            <person name="Kreitler T."/>
            <person name="Lee Y.-A."/>
            <person name="Monti J."/>
            <person name="Schulz H."/>
            <person name="Zimdahl H."/>
            <person name="Himmelbauer H."/>
            <person name="Lehrach H."/>
            <person name="Jacob H.J."/>
            <person name="Bromberg S."/>
            <person name="Gullings-Handley J."/>
            <person name="Jensen-Seaman M.I."/>
            <person name="Kwitek A.E."/>
            <person name="Lazar J."/>
            <person name="Pasko D."/>
            <person name="Tonellato P.J."/>
            <person name="Twigger S."/>
            <person name="Ponting C.P."/>
            <person name="Duarte J.M."/>
            <person name="Rice S."/>
            <person name="Goodstadt L."/>
            <person name="Beatson S.A."/>
            <person name="Emes R.D."/>
            <person name="Winter E.E."/>
            <person name="Webber C."/>
            <person name="Brandt P."/>
            <person name="Nyakatura G."/>
            <person name="Adetobi M."/>
            <person name="Chiaromonte F."/>
            <person name="Elnitski L."/>
            <person name="Eswara P."/>
            <person name="Hardison R.C."/>
            <person name="Hou M."/>
            <person name="Kolbe D."/>
            <person name="Makova K."/>
            <person name="Miller W."/>
            <person name="Nekrutenko A."/>
            <person name="Riemer C."/>
            <person name="Schwartz S."/>
            <person name="Taylor J."/>
            <person name="Yang S."/>
            <person name="Zhang Y."/>
            <person name="Lindpaintner K."/>
            <person name="Andrews T.D."/>
            <person name="Caccamo M."/>
            <person name="Clamp M."/>
            <person name="Clarke L."/>
            <person name="Curwen V."/>
            <person name="Durbin R.M."/>
            <person name="Eyras E."/>
            <person name="Searle S.M."/>
            <person name="Cooper G.M."/>
            <person name="Batzoglou S."/>
            <person name="Brudno M."/>
            <person name="Sidow A."/>
            <person name="Stone E.A."/>
            <person name="Payseur B.A."/>
            <person name="Bourque G."/>
            <person name="Lopez-Otin C."/>
            <person name="Puente X.S."/>
            <person name="Chakrabarti K."/>
            <person name="Chatterji S."/>
            <person name="Dewey C."/>
            <person name="Pachter L."/>
            <person name="Bray N."/>
            <person name="Yap V.B."/>
            <person name="Caspi A."/>
            <person name="Tesler G."/>
            <person name="Pevzner P.A."/>
            <person name="Haussler D."/>
            <person name="Roskin K.M."/>
            <person name="Baertsch R."/>
            <person name="Clawson H."/>
            <person name="Furey T.S."/>
            <person name="Hinrichs A.S."/>
            <person name="Karolchik D."/>
            <person name="Kent W.J."/>
            <person name="Rosenbloom K.R."/>
            <person name="Trumbower H."/>
            <person name="Weirauch M."/>
            <person name="Cooper D.N."/>
            <person name="Stenson P.D."/>
            <person name="Ma B."/>
            <person name="Brent M."/>
            <person name="Arumugam M."/>
            <person name="Shteynberg D."/>
            <person name="Copley R.R."/>
            <person name="Taylor M.S."/>
            <person name="Riethman H."/>
            <person name="Mudunuri U."/>
            <person name="Peterson J."/>
            <person name="Guyer M."/>
            <person name="Felsenfeld A."/>
            <person name="Old S."/>
            <person name="Mockrin S."/>
            <person name="Collins F.S."/>
        </authorList>
    </citation>
    <scope>NUCLEOTIDE SEQUENCE [LARGE SCALE GENOMIC DNA]</scope>
    <source>
        <strain>Brown Norway</strain>
    </source>
</reference>
<reference key="2">
    <citation type="submission" date="2005-09" db="EMBL/GenBank/DDBJ databases">
        <authorList>
            <person name="Mural R.J."/>
            <person name="Adams M.D."/>
            <person name="Myers E.W."/>
            <person name="Smith H.O."/>
            <person name="Venter J.C."/>
        </authorList>
    </citation>
    <scope>NUCLEOTIDE SEQUENCE [LARGE SCALE GENOMIC DNA]</scope>
</reference>
<reference key="3">
    <citation type="journal article" date="2006" name="Proc. Natl. Acad. Sci. U.S.A.">
        <title>Quantitative phosphoproteomics of vasopressin-sensitive renal cells: regulation of aquaporin-2 phosphorylation at two sites.</title>
        <authorList>
            <person name="Hoffert J.D."/>
            <person name="Pisitkun T."/>
            <person name="Wang G."/>
            <person name="Shen R.-F."/>
            <person name="Knepper M.A."/>
        </authorList>
    </citation>
    <scope>PHOSPHORYLATION [LARGE SCALE ANALYSIS] AT THR-139; SER-145 AND THR-153</scope>
    <scope>IDENTIFICATION BY MASS SPECTROMETRY [LARGE SCALE ANALYSIS]</scope>
</reference>
<dbReference type="EMBL" id="CH474011">
    <property type="protein sequence ID" value="EDL88113.1"/>
    <property type="molecule type" value="Genomic_DNA"/>
</dbReference>
<dbReference type="RefSeq" id="NP_001102705.1">
    <property type="nucleotide sequence ID" value="NM_001109235.2"/>
</dbReference>
<dbReference type="SMR" id="D3ZY60"/>
<dbReference type="FunCoup" id="D3ZY60">
    <property type="interactions" value="2770"/>
</dbReference>
<dbReference type="STRING" id="10116.ENSRNOP00000013528"/>
<dbReference type="iPTMnet" id="D3ZY60"/>
<dbReference type="PhosphoSitePlus" id="D3ZY60"/>
<dbReference type="PaxDb" id="10116-ENSRNOP00000013528"/>
<dbReference type="PeptideAtlas" id="D3ZY60"/>
<dbReference type="Ensembl" id="ENSRNOT00000013528.7">
    <property type="protein sequence ID" value="ENSRNOP00000013528.5"/>
    <property type="gene ID" value="ENSRNOG00000009971.7"/>
</dbReference>
<dbReference type="GeneID" id="500132"/>
<dbReference type="KEGG" id="rno:500132"/>
<dbReference type="UCSC" id="RGD:1563940">
    <property type="organism name" value="rat"/>
</dbReference>
<dbReference type="AGR" id="RGD:1563940"/>
<dbReference type="CTD" id="84725"/>
<dbReference type="RGD" id="1563940">
    <property type="gene designation" value="Plekha8"/>
</dbReference>
<dbReference type="eggNOG" id="KOG3221">
    <property type="taxonomic scope" value="Eukaryota"/>
</dbReference>
<dbReference type="GeneTree" id="ENSGT00940000157288"/>
<dbReference type="HOGENOM" id="CLU_039839_0_0_1"/>
<dbReference type="InParanoid" id="D3ZY60"/>
<dbReference type="OMA" id="ERQMEMN"/>
<dbReference type="OrthoDB" id="38486at9989"/>
<dbReference type="PhylomeDB" id="D3ZY60"/>
<dbReference type="TreeFam" id="TF317467"/>
<dbReference type="Reactome" id="R-RNO-1660499">
    <property type="pathway name" value="Synthesis of PIPs at the plasma membrane"/>
</dbReference>
<dbReference type="Reactome" id="R-RNO-9845576">
    <property type="pathway name" value="Glycosphingolipid transport"/>
</dbReference>
<dbReference type="PRO" id="PR:D3ZY60"/>
<dbReference type="Proteomes" id="UP000002494">
    <property type="component" value="Chromosome 4"/>
</dbReference>
<dbReference type="Proteomes" id="UP000234681">
    <property type="component" value="Chromosome 4"/>
</dbReference>
<dbReference type="Bgee" id="ENSRNOG00000009971">
    <property type="expression patterns" value="Expressed in duodenum and 20 other cell types or tissues"/>
</dbReference>
<dbReference type="GO" id="GO:0005829">
    <property type="term" value="C:cytosol"/>
    <property type="evidence" value="ECO:0000318"/>
    <property type="project" value="GO_Central"/>
</dbReference>
<dbReference type="GO" id="GO:0016020">
    <property type="term" value="C:membrane"/>
    <property type="evidence" value="ECO:0007669"/>
    <property type="project" value="UniProtKB-SubCell"/>
</dbReference>
<dbReference type="GO" id="GO:0005654">
    <property type="term" value="C:nucleoplasm"/>
    <property type="evidence" value="ECO:0007669"/>
    <property type="project" value="Ensembl"/>
</dbReference>
<dbReference type="GO" id="GO:0005802">
    <property type="term" value="C:trans-Golgi network"/>
    <property type="evidence" value="ECO:0000250"/>
    <property type="project" value="UniProtKB"/>
</dbReference>
<dbReference type="GO" id="GO:1902387">
    <property type="term" value="F:ceramide 1-phosphate binding"/>
    <property type="evidence" value="ECO:0000318"/>
    <property type="project" value="GO_Central"/>
</dbReference>
<dbReference type="GO" id="GO:1902388">
    <property type="term" value="F:ceramide 1-phosphate transfer activity"/>
    <property type="evidence" value="ECO:0000318"/>
    <property type="project" value="GO_Central"/>
</dbReference>
<dbReference type="GO" id="GO:0097001">
    <property type="term" value="F:ceramide binding"/>
    <property type="evidence" value="ECO:0000250"/>
    <property type="project" value="UniProtKB"/>
</dbReference>
<dbReference type="GO" id="GO:0051861">
    <property type="term" value="F:glycolipid binding"/>
    <property type="evidence" value="ECO:0000250"/>
    <property type="project" value="UniProtKB"/>
</dbReference>
<dbReference type="GO" id="GO:0017089">
    <property type="term" value="F:glycolipid transfer activity"/>
    <property type="evidence" value="ECO:0000250"/>
    <property type="project" value="UniProtKB"/>
</dbReference>
<dbReference type="GO" id="GO:0042802">
    <property type="term" value="F:identical protein binding"/>
    <property type="evidence" value="ECO:0000266"/>
    <property type="project" value="RGD"/>
</dbReference>
<dbReference type="GO" id="GO:0070273">
    <property type="term" value="F:phosphatidylinositol-4-phosphate binding"/>
    <property type="evidence" value="ECO:0000250"/>
    <property type="project" value="UniProtKB"/>
</dbReference>
<dbReference type="GO" id="GO:0035627">
    <property type="term" value="P:ceramide transport"/>
    <property type="evidence" value="ECO:0000318"/>
    <property type="project" value="GO_Central"/>
</dbReference>
<dbReference type="GO" id="GO:0035621">
    <property type="term" value="P:ER to Golgi ceramide transport"/>
    <property type="evidence" value="ECO:0000250"/>
    <property type="project" value="UniProtKB"/>
</dbReference>
<dbReference type="GO" id="GO:0120009">
    <property type="term" value="P:intermembrane lipid transfer"/>
    <property type="evidence" value="ECO:0000318"/>
    <property type="project" value="GO_Central"/>
</dbReference>
<dbReference type="GO" id="GO:0006869">
    <property type="term" value="P:lipid transport"/>
    <property type="evidence" value="ECO:0000250"/>
    <property type="project" value="UniProtKB"/>
</dbReference>
<dbReference type="GO" id="GO:0015031">
    <property type="term" value="P:protein transport"/>
    <property type="evidence" value="ECO:0007669"/>
    <property type="project" value="UniProtKB-KW"/>
</dbReference>
<dbReference type="CDD" id="cd01247">
    <property type="entry name" value="PH_FAPP1_FAPP2"/>
    <property type="match status" value="1"/>
</dbReference>
<dbReference type="FunFam" id="1.10.3520.10:FF:000001">
    <property type="entry name" value="Pleckstrin domain-containing family A member 8"/>
    <property type="match status" value="1"/>
</dbReference>
<dbReference type="FunFam" id="2.30.29.30:FF:000085">
    <property type="entry name" value="Pleckstrin homology domain-containing family A member 8"/>
    <property type="match status" value="1"/>
</dbReference>
<dbReference type="Gene3D" id="1.10.3520.10">
    <property type="entry name" value="Glycolipid transfer protein"/>
    <property type="match status" value="1"/>
</dbReference>
<dbReference type="Gene3D" id="2.30.29.30">
    <property type="entry name" value="Pleckstrin-homology domain (PH domain)/Phosphotyrosine-binding domain (PTB)"/>
    <property type="match status" value="1"/>
</dbReference>
<dbReference type="InterPro" id="IPR036497">
    <property type="entry name" value="GLTP_sf"/>
</dbReference>
<dbReference type="InterPro" id="IPR014830">
    <property type="entry name" value="Glycolipid_transfer_prot_dom"/>
</dbReference>
<dbReference type="InterPro" id="IPR011993">
    <property type="entry name" value="PH-like_dom_sf"/>
</dbReference>
<dbReference type="InterPro" id="IPR001849">
    <property type="entry name" value="PH_domain"/>
</dbReference>
<dbReference type="PANTHER" id="PTHR10219">
    <property type="entry name" value="GLYCOLIPID TRANSFER PROTEIN-RELATED"/>
    <property type="match status" value="1"/>
</dbReference>
<dbReference type="PANTHER" id="PTHR10219:SF25">
    <property type="entry name" value="PLECKSTRIN HOMOLOGY DOMAIN-CONTAINING FAMILY A MEMBER 8"/>
    <property type="match status" value="1"/>
</dbReference>
<dbReference type="Pfam" id="PF08718">
    <property type="entry name" value="GLTP"/>
    <property type="match status" value="1"/>
</dbReference>
<dbReference type="Pfam" id="PF00169">
    <property type="entry name" value="PH"/>
    <property type="match status" value="1"/>
</dbReference>
<dbReference type="SMART" id="SM00233">
    <property type="entry name" value="PH"/>
    <property type="match status" value="1"/>
</dbReference>
<dbReference type="SUPFAM" id="SSF110004">
    <property type="entry name" value="Glycolipid transfer protein, GLTP"/>
    <property type="match status" value="1"/>
</dbReference>
<dbReference type="SUPFAM" id="SSF50729">
    <property type="entry name" value="PH domain-like"/>
    <property type="match status" value="1"/>
</dbReference>
<dbReference type="PROSITE" id="PS50003">
    <property type="entry name" value="PH_DOMAIN"/>
    <property type="match status" value="1"/>
</dbReference>
<sequence>MEGVLYKWTNYLSGWQPRWFLLCGGILSYYDSPEDAWKGCKGSIQMAVCEIQVHSVDNTRMDLIIPGEQYFYLKARSVAERQRWLVALGSAKACLTDSRTQKEKEFAENTENLKTKMSELRLYCDLLVQQVDKTKEVATAGVADSEEGIDVGTLLRSTCNTFLKTLEECMQIANAAFTSELLYHTPPGSPQLAVLKSSKMKHPIIPIHNSLERPIELNSCENGSLSVEVNGDEELLMKTKKSSLYLKSTKADCNISSEENTDGNTTVQGERMKEDGEENLESHDRDLAQPGSDSVCSPESPWEDSEEVIPTFFSTMNTSFSDIELLEDSGIPTEAFLASCYAVVPVLDKLGPTVFAPVKMDLVGNIKKVNQKYITNKEEFTTLQKIVLHEVEADVARVRNSATEALLWLKRGLKFLKGFLTEVKNGEKDIQTALNNAYGKTLRQHHGWVVRGVFALALRAAPSYEDFVAALTIKEGDHQKEAFSAGMQRDLSLYLPAMEKQLAILDTLYEIHGLESDEVV</sequence>
<feature type="chain" id="PRO_0000419608" description="Pleckstrin homology domain-containing family A member 8">
    <location>
        <begin position="1"/>
        <end position="520"/>
    </location>
</feature>
<feature type="domain" description="PH" evidence="3">
    <location>
        <begin position="1"/>
        <end position="93"/>
    </location>
</feature>
<feature type="region of interest" description="Disordered" evidence="4">
    <location>
        <begin position="255"/>
        <end position="303"/>
    </location>
</feature>
<feature type="region of interest" description="Glycolipid transfer protein homology domain">
    <location>
        <begin position="311"/>
        <end position="520"/>
    </location>
</feature>
<feature type="compositionally biased region" description="Polar residues" evidence="4">
    <location>
        <begin position="255"/>
        <end position="268"/>
    </location>
</feature>
<feature type="compositionally biased region" description="Basic and acidic residues" evidence="4">
    <location>
        <begin position="270"/>
        <end position="287"/>
    </location>
</feature>
<feature type="modified residue" description="Phosphothreonine" evidence="5">
    <location>
        <position position="139"/>
    </location>
</feature>
<feature type="modified residue" description="Phosphoserine" evidence="5">
    <location>
        <position position="145"/>
    </location>
</feature>
<feature type="modified residue" description="Phosphothreonine" evidence="5">
    <location>
        <position position="153"/>
    </location>
</feature>